<evidence type="ECO:0000255" key="1">
    <source>
        <dbReference type="HAMAP-Rule" id="MF_00028"/>
    </source>
</evidence>
<organism>
    <name type="scientific">Synechococcus sp. (strain JA-3-3Ab)</name>
    <name type="common">Cyanobacteria bacterium Yellowstone A-Prime</name>
    <dbReference type="NCBI Taxonomy" id="321327"/>
    <lineage>
        <taxon>Bacteria</taxon>
        <taxon>Bacillati</taxon>
        <taxon>Cyanobacteriota</taxon>
        <taxon>Cyanophyceae</taxon>
        <taxon>Synechococcales</taxon>
        <taxon>Synechococcaceae</taxon>
        <taxon>Synechococcus</taxon>
    </lineage>
</organism>
<keyword id="KW-0169">Cobalamin biosynthesis</keyword>
<keyword id="KW-0315">Glutamine amidotransferase</keyword>
<protein>
    <recommendedName>
        <fullName evidence="1">Cobyric acid synthase</fullName>
    </recommendedName>
</protein>
<dbReference type="EMBL" id="CP000239">
    <property type="protein sequence ID" value="ABD00789.1"/>
    <property type="molecule type" value="Genomic_DNA"/>
</dbReference>
<dbReference type="RefSeq" id="WP_011431460.1">
    <property type="nucleotide sequence ID" value="NC_007775.1"/>
</dbReference>
<dbReference type="SMR" id="Q2JRG5"/>
<dbReference type="STRING" id="321327.CYA_2678"/>
<dbReference type="KEGG" id="cya:CYA_2678"/>
<dbReference type="eggNOG" id="COG1492">
    <property type="taxonomic scope" value="Bacteria"/>
</dbReference>
<dbReference type="HOGENOM" id="CLU_019250_2_2_3"/>
<dbReference type="OrthoDB" id="9808302at2"/>
<dbReference type="UniPathway" id="UPA00148"/>
<dbReference type="Proteomes" id="UP000008818">
    <property type="component" value="Chromosome"/>
</dbReference>
<dbReference type="GO" id="GO:0015420">
    <property type="term" value="F:ABC-type vitamin B12 transporter activity"/>
    <property type="evidence" value="ECO:0007669"/>
    <property type="project" value="UniProtKB-UniRule"/>
</dbReference>
<dbReference type="GO" id="GO:0003824">
    <property type="term" value="F:catalytic activity"/>
    <property type="evidence" value="ECO:0007669"/>
    <property type="project" value="InterPro"/>
</dbReference>
<dbReference type="GO" id="GO:0009236">
    <property type="term" value="P:cobalamin biosynthetic process"/>
    <property type="evidence" value="ECO:0007669"/>
    <property type="project" value="UniProtKB-UniRule"/>
</dbReference>
<dbReference type="CDD" id="cd05389">
    <property type="entry name" value="CobQ_N"/>
    <property type="match status" value="1"/>
</dbReference>
<dbReference type="CDD" id="cd01750">
    <property type="entry name" value="GATase1_CobQ"/>
    <property type="match status" value="1"/>
</dbReference>
<dbReference type="Gene3D" id="3.40.50.880">
    <property type="match status" value="1"/>
</dbReference>
<dbReference type="Gene3D" id="3.40.50.300">
    <property type="entry name" value="P-loop containing nucleotide triphosphate hydrolases"/>
    <property type="match status" value="1"/>
</dbReference>
<dbReference type="HAMAP" id="MF_00028">
    <property type="entry name" value="CobQ"/>
    <property type="match status" value="1"/>
</dbReference>
<dbReference type="InterPro" id="IPR029062">
    <property type="entry name" value="Class_I_gatase-like"/>
</dbReference>
<dbReference type="InterPro" id="IPR002586">
    <property type="entry name" value="CobQ/CobB/MinD/ParA_Nub-bd_dom"/>
</dbReference>
<dbReference type="InterPro" id="IPR033949">
    <property type="entry name" value="CobQ_GATase1"/>
</dbReference>
<dbReference type="InterPro" id="IPR047045">
    <property type="entry name" value="CobQ_N"/>
</dbReference>
<dbReference type="InterPro" id="IPR004459">
    <property type="entry name" value="CobQ_synth"/>
</dbReference>
<dbReference type="InterPro" id="IPR011698">
    <property type="entry name" value="GATase_3"/>
</dbReference>
<dbReference type="InterPro" id="IPR027417">
    <property type="entry name" value="P-loop_NTPase"/>
</dbReference>
<dbReference type="NCBIfam" id="TIGR00313">
    <property type="entry name" value="cobQ"/>
    <property type="match status" value="1"/>
</dbReference>
<dbReference type="NCBIfam" id="NF001989">
    <property type="entry name" value="PRK00784.1"/>
    <property type="match status" value="1"/>
</dbReference>
<dbReference type="PANTHER" id="PTHR21343:SF1">
    <property type="entry name" value="COBYRIC ACID SYNTHASE"/>
    <property type="match status" value="1"/>
</dbReference>
<dbReference type="PANTHER" id="PTHR21343">
    <property type="entry name" value="DETHIOBIOTIN SYNTHETASE"/>
    <property type="match status" value="1"/>
</dbReference>
<dbReference type="Pfam" id="PF01656">
    <property type="entry name" value="CbiA"/>
    <property type="match status" value="1"/>
</dbReference>
<dbReference type="Pfam" id="PF07685">
    <property type="entry name" value="GATase_3"/>
    <property type="match status" value="1"/>
</dbReference>
<dbReference type="SUPFAM" id="SSF52317">
    <property type="entry name" value="Class I glutamine amidotransferase-like"/>
    <property type="match status" value="1"/>
</dbReference>
<dbReference type="SUPFAM" id="SSF52540">
    <property type="entry name" value="P-loop containing nucleoside triphosphate hydrolases"/>
    <property type="match status" value="1"/>
</dbReference>
<dbReference type="PROSITE" id="PS51274">
    <property type="entry name" value="GATASE_COBBQ"/>
    <property type="match status" value="1"/>
</dbReference>
<gene>
    <name evidence="1" type="primary">cobQ</name>
    <name type="ordered locus">CYA_2678</name>
</gene>
<feature type="chain" id="PRO_0000332394" description="Cobyric acid synthase">
    <location>
        <begin position="1"/>
        <end position="495"/>
    </location>
</feature>
<feature type="domain" description="GATase cobBQ-type" evidence="1">
    <location>
        <begin position="262"/>
        <end position="445"/>
    </location>
</feature>
<feature type="active site" description="Nucleophile" evidence="1">
    <location>
        <position position="340"/>
    </location>
</feature>
<feature type="active site" evidence="1">
    <location>
        <position position="437"/>
    </location>
</feature>
<accession>Q2JRG5</accession>
<proteinExistence type="inferred from homology"/>
<reference key="1">
    <citation type="journal article" date="2007" name="ISME J.">
        <title>Population level functional diversity in a microbial community revealed by comparative genomic and metagenomic analyses.</title>
        <authorList>
            <person name="Bhaya D."/>
            <person name="Grossman A.R."/>
            <person name="Steunou A.-S."/>
            <person name="Khuri N."/>
            <person name="Cohan F.M."/>
            <person name="Hamamura N."/>
            <person name="Melendrez M.C."/>
            <person name="Bateson M.M."/>
            <person name="Ward D.M."/>
            <person name="Heidelberg J.F."/>
        </authorList>
    </citation>
    <scope>NUCLEOTIDE SEQUENCE [LARGE SCALE GENOMIC DNA]</scope>
    <source>
        <strain>JA-3-3Ab</strain>
    </source>
</reference>
<name>COBQ_SYNJA</name>
<sequence>MSSACRSLMVVGTSSHVGKTLLVAALCRLLKKAGKKVAPFKAQNMSLNAYVTPEGHEIAYAQALQAWAAGIPPAVEMNPILLKPQGNLTSQVVLNGVAVDTCRAGEYYERWFAPAWEAVKTALARLQQQYEWIICEGAGSPAEVNLKHRDLANTRVALHLGSPTWLVADIDRGGALAHVVGTLQLLEPAERALIRGIVINKFRGARELLQPGLDWLENYTGIPVVGVLPWLDWVLPQEDSMGLEAGPQLWENRRERAGRGSCLEIAVIRLPQVANFSDFDPLLAEPSVHLRWVHPGQSLGSPDVVILPGSKTTLKDLLALQKTGLADQLRLYSGHIVGICGGLQMLGQTIADPAGLEGVAGTYPGLGFLPLTTVLQPTKVTQQVQTQSRWPAPAPVQGYEIHQGSTQADPAGCLPIFEQEGLGWRDPTGRVWGSYLHGLFDNHRWRRHWLNELRRQKGWDPLPELEGHYAQQREELLDCLAEAWRPHLEWQQLLE</sequence>
<comment type="function">
    <text evidence="1">Catalyzes amidations at positions B, D, E, and G on adenosylcobyrinic A,C-diamide. NH(2) groups are provided by glutamine, and one molecule of ATP is hydrogenolyzed for each amidation.</text>
</comment>
<comment type="pathway">
    <text evidence="1">Cofactor biosynthesis; adenosylcobalamin biosynthesis.</text>
</comment>
<comment type="similarity">
    <text evidence="1">Belongs to the CobB/CobQ family. CobQ subfamily.</text>
</comment>